<reference key="1">
    <citation type="journal article" date="2005" name="Genome Res.">
        <title>Comparative genome sequencing of Drosophila pseudoobscura: chromosomal, gene, and cis-element evolution.</title>
        <authorList>
            <person name="Richards S."/>
            <person name="Liu Y."/>
            <person name="Bettencourt B.R."/>
            <person name="Hradecky P."/>
            <person name="Letovsky S."/>
            <person name="Nielsen R."/>
            <person name="Thornton K."/>
            <person name="Hubisz M.J."/>
            <person name="Chen R."/>
            <person name="Meisel R.P."/>
            <person name="Couronne O."/>
            <person name="Hua S."/>
            <person name="Smith M.A."/>
            <person name="Zhang P."/>
            <person name="Liu J."/>
            <person name="Bussemaker H.J."/>
            <person name="van Batenburg M.F."/>
            <person name="Howells S.L."/>
            <person name="Scherer S.E."/>
            <person name="Sodergren E."/>
            <person name="Matthews B.B."/>
            <person name="Crosby M.A."/>
            <person name="Schroeder A.J."/>
            <person name="Ortiz-Barrientos D."/>
            <person name="Rives C.M."/>
            <person name="Metzker M.L."/>
            <person name="Muzny D.M."/>
            <person name="Scott G."/>
            <person name="Steffen D."/>
            <person name="Wheeler D.A."/>
            <person name="Worley K.C."/>
            <person name="Havlak P."/>
            <person name="Durbin K.J."/>
            <person name="Egan A."/>
            <person name="Gill R."/>
            <person name="Hume J."/>
            <person name="Morgan M.B."/>
            <person name="Miner G."/>
            <person name="Hamilton C."/>
            <person name="Huang Y."/>
            <person name="Waldron L."/>
            <person name="Verduzco D."/>
            <person name="Clerc-Blankenburg K.P."/>
            <person name="Dubchak I."/>
            <person name="Noor M.A.F."/>
            <person name="Anderson W."/>
            <person name="White K.P."/>
            <person name="Clark A.G."/>
            <person name="Schaeffer S.W."/>
            <person name="Gelbart W.M."/>
            <person name="Weinstock G.M."/>
            <person name="Gibbs R.A."/>
        </authorList>
    </citation>
    <scope>NUCLEOTIDE SEQUENCE [LARGE SCALE GENOMIC DNA]</scope>
    <source>
        <strain>MV2-25 / Tucson 14011-0121.94</strain>
    </source>
</reference>
<gene>
    <name type="ORF">GA17575</name>
</gene>
<sequence>MWDSSMFLSTLTPKFYVALTGTSSLISGLILIFEWWYFRKYGTSFIEQVSINHISPWINGNDAQSDSSNGSGSSTSSGSSSSSNGGGGGGGGGAGGGGPGAGGGTNSTTTTGTQMPECKVWRNPLNLFRGAEYQRFFWATSKEPLTYYDMNLSAQDHQTFFTCEGDARKEEYEIMQTAWRERNPMQRIKSAHNALEINAECAPAYILLAEEEAMTIMEAEKILKTALKVAEINYRKSQATQHQGAIADGMHRRDTNVLIYIKRRLAMCARKLGKLKEAAKMFRDLTKEIPSIMSVLNIHENLIETLLEMQAYADCHAILAKYDDISLPKSATICYTAALLKARAVADKFSPDIASKRGLSPAEMSAVEAIHRAVEFNPHVPKYLLETKPLILPPEHILKRGDSEALAYAFFHLKHWKQVEGALNLLHCTWEGTFRMLPYPLERGHLFYPYPTCTECADRELLPAFHEVSVYPKKELPFFILFTAGLCSFTALLALLTHQYPEPMGLLAQTVLTWISYPFQLLKERVEAFWPCNLLQQLSRV</sequence>
<keyword id="KW-0472">Membrane</keyword>
<keyword id="KW-1185">Reference proteome</keyword>
<keyword id="KW-0812">Transmembrane</keyword>
<keyword id="KW-1133">Transmembrane helix</keyword>
<organism>
    <name type="scientific">Drosophila pseudoobscura pseudoobscura</name>
    <name type="common">Fruit fly</name>
    <dbReference type="NCBI Taxonomy" id="46245"/>
    <lineage>
        <taxon>Eukaryota</taxon>
        <taxon>Metazoa</taxon>
        <taxon>Ecdysozoa</taxon>
        <taxon>Arthropoda</taxon>
        <taxon>Hexapoda</taxon>
        <taxon>Insecta</taxon>
        <taxon>Pterygota</taxon>
        <taxon>Neoptera</taxon>
        <taxon>Endopterygota</taxon>
        <taxon>Diptera</taxon>
        <taxon>Brachycera</taxon>
        <taxon>Muscomorpha</taxon>
        <taxon>Ephydroidea</taxon>
        <taxon>Drosophilidae</taxon>
        <taxon>Drosophila</taxon>
        <taxon>Sophophora</taxon>
    </lineage>
</organism>
<feature type="chain" id="PRO_0000339224" description="Protein ST7 homolog">
    <location>
        <begin position="1"/>
        <end position="541"/>
    </location>
</feature>
<feature type="transmembrane region" description="Helical" evidence="1">
    <location>
        <begin position="15"/>
        <end position="35"/>
    </location>
</feature>
<feature type="transmembrane region" description="Helical" evidence="1">
    <location>
        <begin position="476"/>
        <end position="496"/>
    </location>
</feature>
<feature type="region of interest" description="Disordered" evidence="2">
    <location>
        <begin position="62"/>
        <end position="116"/>
    </location>
</feature>
<feature type="compositionally biased region" description="Low complexity" evidence="2">
    <location>
        <begin position="67"/>
        <end position="83"/>
    </location>
</feature>
<feature type="compositionally biased region" description="Gly residues" evidence="2">
    <location>
        <begin position="84"/>
        <end position="105"/>
    </location>
</feature>
<dbReference type="EMBL" id="CH379069">
    <property type="protein sequence ID" value="EAL30730.2"/>
    <property type="molecule type" value="Genomic_DNA"/>
</dbReference>
<dbReference type="FunCoup" id="Q2M146">
    <property type="interactions" value="1171"/>
</dbReference>
<dbReference type="EnsemblMetazoa" id="FBtr0276444">
    <property type="protein sequence ID" value="FBpp0274882"/>
    <property type="gene ID" value="FBgn0077586"/>
</dbReference>
<dbReference type="KEGG" id="dpo:4813442"/>
<dbReference type="eggNOG" id="KOG3807">
    <property type="taxonomic scope" value="Eukaryota"/>
</dbReference>
<dbReference type="HOGENOM" id="CLU_035578_2_0_1"/>
<dbReference type="InParanoid" id="Q2M146"/>
<dbReference type="OMA" id="IEAIWPC"/>
<dbReference type="Proteomes" id="UP000001819">
    <property type="component" value="Chromosome X"/>
</dbReference>
<dbReference type="Bgee" id="FBgn0077586">
    <property type="expression patterns" value="Expressed in female reproductive system and 3 other cell types or tissues"/>
</dbReference>
<dbReference type="GO" id="GO:0016020">
    <property type="term" value="C:membrane"/>
    <property type="evidence" value="ECO:0007669"/>
    <property type="project" value="UniProtKB-SubCell"/>
</dbReference>
<dbReference type="CDD" id="cd11557">
    <property type="entry name" value="ST7"/>
    <property type="match status" value="1"/>
</dbReference>
<dbReference type="InterPro" id="IPR007311">
    <property type="entry name" value="ST7"/>
</dbReference>
<dbReference type="PANTHER" id="PTHR12745:SF6">
    <property type="entry name" value="PROTEIN ST7 HOMOLOG"/>
    <property type="match status" value="1"/>
</dbReference>
<dbReference type="PANTHER" id="PTHR12745">
    <property type="entry name" value="SUPPRESSION OF TUMORIGENICITY 7"/>
    <property type="match status" value="1"/>
</dbReference>
<dbReference type="Pfam" id="PF04184">
    <property type="entry name" value="ST7"/>
    <property type="match status" value="2"/>
</dbReference>
<name>ST7_DROPS</name>
<comment type="subcellular location">
    <subcellularLocation>
        <location evidence="3">Membrane</location>
        <topology evidence="3">Multi-pass membrane protein</topology>
    </subcellularLocation>
</comment>
<comment type="similarity">
    <text evidence="3">Belongs to the ST7 family.</text>
</comment>
<proteinExistence type="inferred from homology"/>
<accession>Q2M146</accession>
<protein>
    <recommendedName>
        <fullName>Protein ST7 homolog</fullName>
    </recommendedName>
</protein>
<evidence type="ECO:0000255" key="1"/>
<evidence type="ECO:0000256" key="2">
    <source>
        <dbReference type="SAM" id="MobiDB-lite"/>
    </source>
</evidence>
<evidence type="ECO:0000305" key="3"/>